<accession>Q6FQ87</accession>
<comment type="function">
    <text evidence="1">Component of the Mediator complex, a coactivator involved in the regulated transcription of nearly all RNA polymerase II-dependent genes. Mediator functions as a bridge to convey information from gene-specific regulatory proteins to the basal RNA polymerase II transcription machinery. Mediator is recruited to promoters by direct interactions with regulatory proteins and serves as a scaffold for the assembly of a functional preinitiation complex with RNA polymerase II and the general transcription factors (By similarity).</text>
</comment>
<comment type="subunit">
    <text evidence="1">Component of the Mediator complex.</text>
</comment>
<comment type="subcellular location">
    <subcellularLocation>
        <location evidence="1">Nucleus</location>
    </subcellularLocation>
</comment>
<comment type="similarity">
    <text evidence="3">Belongs to the Mediator complex subunit 17 family.</text>
</comment>
<proteinExistence type="inferred from homology"/>
<protein>
    <recommendedName>
        <fullName>Mediator of RNA polymerase II transcription subunit 17</fullName>
    </recommendedName>
    <alternativeName>
        <fullName>Mediator complex subunit 17</fullName>
    </alternativeName>
</protein>
<reference key="1">
    <citation type="journal article" date="2004" name="Nature">
        <title>Genome evolution in yeasts.</title>
        <authorList>
            <person name="Dujon B."/>
            <person name="Sherman D."/>
            <person name="Fischer G."/>
            <person name="Durrens P."/>
            <person name="Casaregola S."/>
            <person name="Lafontaine I."/>
            <person name="de Montigny J."/>
            <person name="Marck C."/>
            <person name="Neuveglise C."/>
            <person name="Talla E."/>
            <person name="Goffard N."/>
            <person name="Frangeul L."/>
            <person name="Aigle M."/>
            <person name="Anthouard V."/>
            <person name="Babour A."/>
            <person name="Barbe V."/>
            <person name="Barnay S."/>
            <person name="Blanchin S."/>
            <person name="Beckerich J.-M."/>
            <person name="Beyne E."/>
            <person name="Bleykasten C."/>
            <person name="Boisrame A."/>
            <person name="Boyer J."/>
            <person name="Cattolico L."/>
            <person name="Confanioleri F."/>
            <person name="de Daruvar A."/>
            <person name="Despons L."/>
            <person name="Fabre E."/>
            <person name="Fairhead C."/>
            <person name="Ferry-Dumazet H."/>
            <person name="Groppi A."/>
            <person name="Hantraye F."/>
            <person name="Hennequin C."/>
            <person name="Jauniaux N."/>
            <person name="Joyet P."/>
            <person name="Kachouri R."/>
            <person name="Kerrest A."/>
            <person name="Koszul R."/>
            <person name="Lemaire M."/>
            <person name="Lesur I."/>
            <person name="Ma L."/>
            <person name="Muller H."/>
            <person name="Nicaud J.-M."/>
            <person name="Nikolski M."/>
            <person name="Oztas S."/>
            <person name="Ozier-Kalogeropoulos O."/>
            <person name="Pellenz S."/>
            <person name="Potier S."/>
            <person name="Richard G.-F."/>
            <person name="Straub M.-L."/>
            <person name="Suleau A."/>
            <person name="Swennen D."/>
            <person name="Tekaia F."/>
            <person name="Wesolowski-Louvel M."/>
            <person name="Westhof E."/>
            <person name="Wirth B."/>
            <person name="Zeniou-Meyer M."/>
            <person name="Zivanovic Y."/>
            <person name="Bolotin-Fukuhara M."/>
            <person name="Thierry A."/>
            <person name="Bouchier C."/>
            <person name="Caudron B."/>
            <person name="Scarpelli C."/>
            <person name="Gaillardin C."/>
            <person name="Weissenbach J."/>
            <person name="Wincker P."/>
            <person name="Souciet J.-L."/>
        </authorList>
    </citation>
    <scope>NUCLEOTIDE SEQUENCE [LARGE SCALE GENOMIC DNA]</scope>
    <source>
        <strain>ATCC 2001 / BCRC 20586 / JCM 3761 / NBRC 0622 / NRRL Y-65 / CBS 138</strain>
    </source>
</reference>
<dbReference type="EMBL" id="CR380955">
    <property type="protein sequence ID" value="CAG60544.1"/>
    <property type="molecule type" value="Genomic_DNA"/>
</dbReference>
<dbReference type="RefSeq" id="XP_447607.1">
    <property type="nucleotide sequence ID" value="XM_447607.1"/>
</dbReference>
<dbReference type="SMR" id="Q6FQ87"/>
<dbReference type="FunCoup" id="Q6FQ87">
    <property type="interactions" value="193"/>
</dbReference>
<dbReference type="STRING" id="284593.Q6FQ87"/>
<dbReference type="EnsemblFungi" id="CAGL0I08261g-T">
    <property type="protein sequence ID" value="CAGL0I08261g-T-p1"/>
    <property type="gene ID" value="CAGL0I08261g"/>
</dbReference>
<dbReference type="KEGG" id="cgr:2889298"/>
<dbReference type="CGD" id="CAL0132518">
    <property type="gene designation" value="CAGL0I08261g"/>
</dbReference>
<dbReference type="VEuPathDB" id="FungiDB:B1J91_I08261g"/>
<dbReference type="VEuPathDB" id="FungiDB:CAGL0I08261g"/>
<dbReference type="eggNOG" id="ENOG502QS9H">
    <property type="taxonomic scope" value="Eukaryota"/>
</dbReference>
<dbReference type="HOGENOM" id="CLU_023188_0_0_1"/>
<dbReference type="InParanoid" id="Q6FQ87"/>
<dbReference type="OMA" id="PKINDKR"/>
<dbReference type="Proteomes" id="UP000002428">
    <property type="component" value="Chromosome I"/>
</dbReference>
<dbReference type="GO" id="GO:0070847">
    <property type="term" value="C:core mediator complex"/>
    <property type="evidence" value="ECO:0007669"/>
    <property type="project" value="EnsemblFungi"/>
</dbReference>
<dbReference type="GO" id="GO:0016592">
    <property type="term" value="C:mediator complex"/>
    <property type="evidence" value="ECO:0007669"/>
    <property type="project" value="InterPro"/>
</dbReference>
<dbReference type="GO" id="GO:0140297">
    <property type="term" value="F:DNA-binding transcription factor binding"/>
    <property type="evidence" value="ECO:0007669"/>
    <property type="project" value="EnsemblFungi"/>
</dbReference>
<dbReference type="GO" id="GO:0001139">
    <property type="term" value="F:RNA polymerase II complex recruiting activity"/>
    <property type="evidence" value="ECO:0007669"/>
    <property type="project" value="EnsemblFungi"/>
</dbReference>
<dbReference type="GO" id="GO:0000979">
    <property type="term" value="F:RNA polymerase II core promoter sequence-specific DNA binding"/>
    <property type="evidence" value="ECO:0007669"/>
    <property type="project" value="EnsemblFungi"/>
</dbReference>
<dbReference type="GO" id="GO:0003712">
    <property type="term" value="F:transcription coregulator activity"/>
    <property type="evidence" value="ECO:0007669"/>
    <property type="project" value="InterPro"/>
</dbReference>
<dbReference type="GO" id="GO:0034605">
    <property type="term" value="P:cellular response to heat"/>
    <property type="evidence" value="ECO:0007669"/>
    <property type="project" value="EnsemblFungi"/>
</dbReference>
<dbReference type="GO" id="GO:0032968">
    <property type="term" value="P:positive regulation of transcription elongation by RNA polymerase II"/>
    <property type="evidence" value="ECO:0007669"/>
    <property type="project" value="EnsemblFungi"/>
</dbReference>
<dbReference type="GO" id="GO:0060261">
    <property type="term" value="P:positive regulation of transcription initiation by RNA polymerase II"/>
    <property type="evidence" value="ECO:0007669"/>
    <property type="project" value="EnsemblFungi"/>
</dbReference>
<dbReference type="Gene3D" id="6.10.250.2620">
    <property type="match status" value="1"/>
</dbReference>
<dbReference type="InterPro" id="IPR019313">
    <property type="entry name" value="Mediator_Med17"/>
</dbReference>
<dbReference type="PANTHER" id="PTHR13114">
    <property type="entry name" value="MEDIATOR OF RNA POLYMERASE II TRANSCRIPTION SUBUNIT 17"/>
    <property type="match status" value="1"/>
</dbReference>
<dbReference type="PANTHER" id="PTHR13114:SF7">
    <property type="entry name" value="MEDIATOR OF RNA POLYMERASE II TRANSCRIPTION SUBUNIT 17"/>
    <property type="match status" value="1"/>
</dbReference>
<dbReference type="Pfam" id="PF10156">
    <property type="entry name" value="Med17"/>
    <property type="match status" value="1"/>
</dbReference>
<feature type="chain" id="PRO_0000304714" description="Mediator of RNA polymerase II transcription subunit 17">
    <location>
        <begin position="1"/>
        <end position="676"/>
    </location>
</feature>
<feature type="region of interest" description="Disordered" evidence="2">
    <location>
        <begin position="27"/>
        <end position="68"/>
    </location>
</feature>
<feature type="region of interest" description="Disordered" evidence="2">
    <location>
        <begin position="117"/>
        <end position="176"/>
    </location>
</feature>
<feature type="compositionally biased region" description="Low complexity" evidence="2">
    <location>
        <begin position="29"/>
        <end position="40"/>
    </location>
</feature>
<feature type="compositionally biased region" description="Basic and acidic residues" evidence="2">
    <location>
        <begin position="47"/>
        <end position="56"/>
    </location>
</feature>
<feature type="compositionally biased region" description="Basic and acidic residues" evidence="2">
    <location>
        <begin position="120"/>
        <end position="134"/>
    </location>
</feature>
<feature type="compositionally biased region" description="Acidic residues" evidence="2">
    <location>
        <begin position="135"/>
        <end position="145"/>
    </location>
</feature>
<feature type="compositionally biased region" description="Polar residues" evidence="2">
    <location>
        <begin position="146"/>
        <end position="160"/>
    </location>
</feature>
<name>MED17_CANGA</name>
<gene>
    <name type="primary">SRB4</name>
    <name type="synonym">MED17</name>
    <name type="ordered locus">CAGL0I08261g</name>
</gene>
<sequence>MTQLTENTDELHSIRLAIDPNLITLPIGSKSTSPHSNSTSDGNPESHNTENEEVDNKAGSLPPEQFSNNSAKLIVNPYEKYGRMSLGQLIPLISQQRGPNFKFADINEDILKQELAIENDNGKQESKDDTKAEDGIDTMDIDQNDNSEANTNDIGYNEWSNEPKEDTGILDNTQDTNINGEMESQLTQEEFNKIRKVMLEHINMAMNESSLAMEFVSLLLSPVRESTAVSSMSPFLKKTVNPGSLNSEKVKMPAVSRRDKLSLSILSRGWKLRALNEARAILKKNFTEISSSLKQEHHYWSSIAYNISNKDVLFKIRDKQTTKRSLGLKYGYEDSGSTFRNDRGTAILRGTDEANGLELIPLTLGRTSTVGSVYKGGKFLRVRIFTKIESEGDYILSGESSLDKLFKNHSENSDSKNDDVRLQISKLKFFIFEQELMHQLKKECAYLISYGVTVENEHKIVIELPNEKFEIEYLSLDDDSVVNHEQDAPKANDRRANLMLVTLRMLLIVIYKKNLRQKMVSNTRKHIASTEKDILLIRPLLGKMRHSNHKKLIRKILKECVLEVVPDTELQERSIQSLDKEDFETFDLQDAHIVKLTKDINAFRNVLDVGKTEFTIDMKQSGKLSLILESPNYCNAQVSIKYDNQTSNTHFNTVSTEFKEVEEFLHFLISTYVNPE</sequence>
<organism>
    <name type="scientific">Candida glabrata (strain ATCC 2001 / BCRC 20586 / JCM 3761 / NBRC 0622 / NRRL Y-65 / CBS 138)</name>
    <name type="common">Yeast</name>
    <name type="synonym">Nakaseomyces glabratus</name>
    <dbReference type="NCBI Taxonomy" id="284593"/>
    <lineage>
        <taxon>Eukaryota</taxon>
        <taxon>Fungi</taxon>
        <taxon>Dikarya</taxon>
        <taxon>Ascomycota</taxon>
        <taxon>Saccharomycotina</taxon>
        <taxon>Saccharomycetes</taxon>
        <taxon>Saccharomycetales</taxon>
        <taxon>Saccharomycetaceae</taxon>
        <taxon>Nakaseomyces</taxon>
    </lineage>
</organism>
<keyword id="KW-0010">Activator</keyword>
<keyword id="KW-0539">Nucleus</keyword>
<keyword id="KW-1185">Reference proteome</keyword>
<keyword id="KW-0804">Transcription</keyword>
<keyword id="KW-0805">Transcription regulation</keyword>
<evidence type="ECO:0000250" key="1"/>
<evidence type="ECO:0000256" key="2">
    <source>
        <dbReference type="SAM" id="MobiDB-lite"/>
    </source>
</evidence>
<evidence type="ECO:0000305" key="3"/>